<feature type="chain" id="PRO_0000281949" description="Putative F-box/LRR-repeat protein At3g28410">
    <location>
        <begin position="1"/>
        <end position="465"/>
    </location>
</feature>
<feature type="domain" description="F-box">
    <location>
        <begin position="27"/>
        <end position="73"/>
    </location>
</feature>
<feature type="repeat" description="LRR 1">
    <location>
        <begin position="127"/>
        <end position="155"/>
    </location>
</feature>
<feature type="repeat" description="LRR 2">
    <location>
        <begin position="178"/>
        <end position="203"/>
    </location>
</feature>
<feature type="repeat" description="LRR 3">
    <location>
        <begin position="207"/>
        <end position="225"/>
    </location>
</feature>
<feature type="repeat" description="LRR 4">
    <location>
        <begin position="278"/>
        <end position="302"/>
    </location>
</feature>
<feature type="repeat" description="LRR 5">
    <location>
        <begin position="332"/>
        <end position="357"/>
    </location>
</feature>
<feature type="repeat" description="LRR 6">
    <location>
        <begin position="402"/>
        <end position="427"/>
    </location>
</feature>
<feature type="repeat" description="LRR 7">
    <location>
        <begin position="447"/>
        <end position="465"/>
    </location>
</feature>
<organism>
    <name type="scientific">Arabidopsis thaliana</name>
    <name type="common">Mouse-ear cress</name>
    <dbReference type="NCBI Taxonomy" id="3702"/>
    <lineage>
        <taxon>Eukaryota</taxon>
        <taxon>Viridiplantae</taxon>
        <taxon>Streptophyta</taxon>
        <taxon>Embryophyta</taxon>
        <taxon>Tracheophyta</taxon>
        <taxon>Spermatophyta</taxon>
        <taxon>Magnoliopsida</taxon>
        <taxon>eudicotyledons</taxon>
        <taxon>Gunneridae</taxon>
        <taxon>Pentapetalae</taxon>
        <taxon>rosids</taxon>
        <taxon>malvids</taxon>
        <taxon>Brassicales</taxon>
        <taxon>Brassicaceae</taxon>
        <taxon>Camelineae</taxon>
        <taxon>Arabidopsis</taxon>
    </lineage>
</organism>
<protein>
    <recommendedName>
        <fullName>Putative F-box/LRR-repeat protein At3g28410</fullName>
    </recommendedName>
</protein>
<reference key="1">
    <citation type="journal article" date="2000" name="DNA Res.">
        <title>Structural analysis of Arabidopsis thaliana chromosome 3. I. Sequence features of the regions of 4,504,864 bp covered by sixty P1 and TAC clones.</title>
        <authorList>
            <person name="Sato S."/>
            <person name="Nakamura Y."/>
            <person name="Kaneko T."/>
            <person name="Katoh T."/>
            <person name="Asamizu E."/>
            <person name="Tabata S."/>
        </authorList>
    </citation>
    <scope>NUCLEOTIDE SEQUENCE [LARGE SCALE GENOMIC DNA]</scope>
    <source>
        <strain>cv. Columbia</strain>
    </source>
</reference>
<reference key="2">
    <citation type="journal article" date="2017" name="Plant J.">
        <title>Araport11: a complete reannotation of the Arabidopsis thaliana reference genome.</title>
        <authorList>
            <person name="Cheng C.Y."/>
            <person name="Krishnakumar V."/>
            <person name="Chan A.P."/>
            <person name="Thibaud-Nissen F."/>
            <person name="Schobel S."/>
            <person name="Town C.D."/>
        </authorList>
    </citation>
    <scope>GENOME REANNOTATION</scope>
    <source>
        <strain>cv. Columbia</strain>
    </source>
</reference>
<keyword id="KW-0433">Leucine-rich repeat</keyword>
<keyword id="KW-1185">Reference proteome</keyword>
<keyword id="KW-0677">Repeat</keyword>
<sequence length="465" mass="53692">MAKRREKRGRRRQHRSHRKIQRIIDGADFINYMPDDILHHILSFIPTDLAMRTSVLSRRWRHVWCETPCLDIKLKHGETNQTLTSYTAPIITSFKLVMDLNDNTVPQVDSWIEFALSRNVQNLSVFVRDFTYTKTYRFPDIFYISSSLKQLDVTLDFFDMIPTCAVSWKSLRNLTLRFCQIPDESMHNILSGCPILESLTLDTCRLLERLDLSKSPNLRRLDINRQYRRTGPIAIVAPHIYYLRLTYSSTPSTIVDVSSLSEANLNIISDRLLSPLTADRYQTMALEMLSKFHNVKRLTVGETILQILSLAELRGVPFPTLKVQTLTVKTEFVRSVIPGISRLLQNSPGLKKLTLHTLQLSHDIMEMHPLKGLYPDQCWRSTCEVFPTSKEIYKMLGCNDATSKLVASFMNLVLRNAKTLERMVVWLGGIYFNGDAPWFEEELFDMVETLSHNNNVSILLKQSNC</sequence>
<evidence type="ECO:0000305" key="1"/>
<gene>
    <name type="ordered locus">At3g28410</name>
    <name type="ORF">MFJ20.9</name>
</gene>
<comment type="sequence caution" evidence="1">
    <conflict type="erroneous initiation">
        <sequence resource="EMBL-CDS" id="BAB02857"/>
    </conflict>
    <text>Extended N-terminus.</text>
</comment>
<name>FBL48_ARATH</name>
<accession>Q9LSJ3</accession>
<dbReference type="EMBL" id="AB026644">
    <property type="protein sequence ID" value="BAB02857.1"/>
    <property type="status" value="ALT_INIT"/>
    <property type="molecule type" value="Genomic_DNA"/>
</dbReference>
<dbReference type="EMBL" id="CP002686">
    <property type="protein sequence ID" value="AEE77441.1"/>
    <property type="molecule type" value="Genomic_DNA"/>
</dbReference>
<dbReference type="RefSeq" id="NP_189482.1">
    <property type="nucleotide sequence ID" value="NM_113761.1"/>
</dbReference>
<dbReference type="FunCoup" id="Q9LSJ3">
    <property type="interactions" value="511"/>
</dbReference>
<dbReference type="GlyGen" id="Q9LSJ3">
    <property type="glycosylation" value="1 site"/>
</dbReference>
<dbReference type="PaxDb" id="3702-AT3G28410.1"/>
<dbReference type="EnsemblPlants" id="AT3G28410.1">
    <property type="protein sequence ID" value="AT3G28410.1"/>
    <property type="gene ID" value="AT3G28410"/>
</dbReference>
<dbReference type="GeneID" id="822470"/>
<dbReference type="Gramene" id="AT3G28410.1">
    <property type="protein sequence ID" value="AT3G28410.1"/>
    <property type="gene ID" value="AT3G28410"/>
</dbReference>
<dbReference type="KEGG" id="ath:AT3G28410"/>
<dbReference type="Araport" id="AT3G28410"/>
<dbReference type="TAIR" id="AT3G28410"/>
<dbReference type="HOGENOM" id="CLU_010721_5_0_1"/>
<dbReference type="InParanoid" id="Q9LSJ3"/>
<dbReference type="OMA" id="LDINRQY"/>
<dbReference type="OrthoDB" id="1939276at2759"/>
<dbReference type="PRO" id="PR:Q9LSJ3"/>
<dbReference type="Proteomes" id="UP000006548">
    <property type="component" value="Chromosome 3"/>
</dbReference>
<dbReference type="ExpressionAtlas" id="Q9LSJ3">
    <property type="expression patterns" value="baseline"/>
</dbReference>
<dbReference type="CDD" id="cd22160">
    <property type="entry name" value="F-box_AtFBL13-like"/>
    <property type="match status" value="1"/>
</dbReference>
<dbReference type="Gene3D" id="1.20.1280.50">
    <property type="match status" value="1"/>
</dbReference>
<dbReference type="Gene3D" id="3.80.10.10">
    <property type="entry name" value="Ribonuclease Inhibitor"/>
    <property type="match status" value="1"/>
</dbReference>
<dbReference type="InterPro" id="IPR036047">
    <property type="entry name" value="F-box-like_dom_sf"/>
</dbReference>
<dbReference type="InterPro" id="IPR053781">
    <property type="entry name" value="F-box_AtFBL13-like"/>
</dbReference>
<dbReference type="InterPro" id="IPR001810">
    <property type="entry name" value="F-box_dom"/>
</dbReference>
<dbReference type="InterPro" id="IPR044997">
    <property type="entry name" value="F-box_plant"/>
</dbReference>
<dbReference type="InterPro" id="IPR032675">
    <property type="entry name" value="LRR_dom_sf"/>
</dbReference>
<dbReference type="InterPro" id="IPR055411">
    <property type="entry name" value="LRR_FXL15/At3g58940/PEG3-like"/>
</dbReference>
<dbReference type="PANTHER" id="PTHR32153">
    <property type="entry name" value="OJ000223_09.16 PROTEIN"/>
    <property type="match status" value="1"/>
</dbReference>
<dbReference type="Pfam" id="PF00646">
    <property type="entry name" value="F-box"/>
    <property type="match status" value="1"/>
</dbReference>
<dbReference type="Pfam" id="PF24758">
    <property type="entry name" value="LRR_At5g56370"/>
    <property type="match status" value="1"/>
</dbReference>
<dbReference type="SMART" id="SM00256">
    <property type="entry name" value="FBOX"/>
    <property type="match status" value="1"/>
</dbReference>
<dbReference type="SUPFAM" id="SSF81383">
    <property type="entry name" value="F-box domain"/>
    <property type="match status" value="1"/>
</dbReference>
<dbReference type="SUPFAM" id="SSF52047">
    <property type="entry name" value="RNI-like"/>
    <property type="match status" value="1"/>
</dbReference>
<proteinExistence type="predicted"/>